<accession>Q4UR77</accession>
<comment type="function">
    <text evidence="1">Has an important function as a repair enzyme for proteins that have been inactivated by oxidation. Catalyzes the reversible oxidation-reduction of methionine sulfoxide in proteins to methionine.</text>
</comment>
<comment type="catalytic activity">
    <reaction evidence="1">
        <text>L-methionyl-[protein] + [thioredoxin]-disulfide + H2O = L-methionyl-(S)-S-oxide-[protein] + [thioredoxin]-dithiol</text>
        <dbReference type="Rhea" id="RHEA:14217"/>
        <dbReference type="Rhea" id="RHEA-COMP:10698"/>
        <dbReference type="Rhea" id="RHEA-COMP:10700"/>
        <dbReference type="Rhea" id="RHEA-COMP:12313"/>
        <dbReference type="Rhea" id="RHEA-COMP:12315"/>
        <dbReference type="ChEBI" id="CHEBI:15377"/>
        <dbReference type="ChEBI" id="CHEBI:16044"/>
        <dbReference type="ChEBI" id="CHEBI:29950"/>
        <dbReference type="ChEBI" id="CHEBI:44120"/>
        <dbReference type="ChEBI" id="CHEBI:50058"/>
        <dbReference type="EC" id="1.8.4.11"/>
    </reaction>
</comment>
<comment type="catalytic activity">
    <reaction evidence="1">
        <text>[thioredoxin]-disulfide + L-methionine + H2O = L-methionine (S)-S-oxide + [thioredoxin]-dithiol</text>
        <dbReference type="Rhea" id="RHEA:19993"/>
        <dbReference type="Rhea" id="RHEA-COMP:10698"/>
        <dbReference type="Rhea" id="RHEA-COMP:10700"/>
        <dbReference type="ChEBI" id="CHEBI:15377"/>
        <dbReference type="ChEBI" id="CHEBI:29950"/>
        <dbReference type="ChEBI" id="CHEBI:50058"/>
        <dbReference type="ChEBI" id="CHEBI:57844"/>
        <dbReference type="ChEBI" id="CHEBI:58772"/>
        <dbReference type="EC" id="1.8.4.11"/>
    </reaction>
</comment>
<comment type="similarity">
    <text evidence="1">Belongs to the MsrA Met sulfoxide reductase family.</text>
</comment>
<proteinExistence type="inferred from homology"/>
<dbReference type="EC" id="1.8.4.11" evidence="1"/>
<dbReference type="EMBL" id="CP000050">
    <property type="protein sequence ID" value="AAY50446.1"/>
    <property type="molecule type" value="Genomic_DNA"/>
</dbReference>
<dbReference type="RefSeq" id="WP_011269981.1">
    <property type="nucleotide sequence ID" value="NC_007086.1"/>
</dbReference>
<dbReference type="SMR" id="Q4UR77"/>
<dbReference type="KEGG" id="xcb:XC_3402"/>
<dbReference type="HOGENOM" id="CLU_031040_10_3_6"/>
<dbReference type="Proteomes" id="UP000000420">
    <property type="component" value="Chromosome"/>
</dbReference>
<dbReference type="GO" id="GO:0005737">
    <property type="term" value="C:cytoplasm"/>
    <property type="evidence" value="ECO:0007669"/>
    <property type="project" value="TreeGrafter"/>
</dbReference>
<dbReference type="GO" id="GO:0036456">
    <property type="term" value="F:L-methionine-(S)-S-oxide reductase activity"/>
    <property type="evidence" value="ECO:0007669"/>
    <property type="project" value="TreeGrafter"/>
</dbReference>
<dbReference type="GO" id="GO:0008113">
    <property type="term" value="F:peptide-methionine (S)-S-oxide reductase activity"/>
    <property type="evidence" value="ECO:0007669"/>
    <property type="project" value="UniProtKB-UniRule"/>
</dbReference>
<dbReference type="GO" id="GO:0034599">
    <property type="term" value="P:cellular response to oxidative stress"/>
    <property type="evidence" value="ECO:0007669"/>
    <property type="project" value="TreeGrafter"/>
</dbReference>
<dbReference type="GO" id="GO:0036211">
    <property type="term" value="P:protein modification process"/>
    <property type="evidence" value="ECO:0007669"/>
    <property type="project" value="UniProtKB-UniRule"/>
</dbReference>
<dbReference type="FunFam" id="3.30.1060.10:FF:000001">
    <property type="entry name" value="Peptide methionine sulfoxide reductase MsrA"/>
    <property type="match status" value="1"/>
</dbReference>
<dbReference type="Gene3D" id="3.30.1060.10">
    <property type="entry name" value="Peptide methionine sulphoxide reductase MsrA"/>
    <property type="match status" value="1"/>
</dbReference>
<dbReference type="HAMAP" id="MF_01401">
    <property type="entry name" value="MsrA"/>
    <property type="match status" value="1"/>
</dbReference>
<dbReference type="InterPro" id="IPR002569">
    <property type="entry name" value="Met_Sox_Rdtase_MsrA_dom"/>
</dbReference>
<dbReference type="InterPro" id="IPR036509">
    <property type="entry name" value="Met_Sox_Rdtase_MsrA_sf"/>
</dbReference>
<dbReference type="InterPro" id="IPR050162">
    <property type="entry name" value="MsrA_MetSO_reductase"/>
</dbReference>
<dbReference type="NCBIfam" id="TIGR00401">
    <property type="entry name" value="msrA"/>
    <property type="match status" value="1"/>
</dbReference>
<dbReference type="PANTHER" id="PTHR42799">
    <property type="entry name" value="MITOCHONDRIAL PEPTIDE METHIONINE SULFOXIDE REDUCTASE"/>
    <property type="match status" value="1"/>
</dbReference>
<dbReference type="PANTHER" id="PTHR42799:SF2">
    <property type="entry name" value="MITOCHONDRIAL PEPTIDE METHIONINE SULFOXIDE REDUCTASE"/>
    <property type="match status" value="1"/>
</dbReference>
<dbReference type="Pfam" id="PF01625">
    <property type="entry name" value="PMSR"/>
    <property type="match status" value="1"/>
</dbReference>
<dbReference type="SUPFAM" id="SSF55068">
    <property type="entry name" value="Peptide methionine sulfoxide reductase"/>
    <property type="match status" value="1"/>
</dbReference>
<evidence type="ECO:0000255" key="1">
    <source>
        <dbReference type="HAMAP-Rule" id="MF_01401"/>
    </source>
</evidence>
<protein>
    <recommendedName>
        <fullName evidence="1">Peptide methionine sulfoxide reductase MsrA</fullName>
        <shortName evidence="1">Protein-methionine-S-oxide reductase</shortName>
        <ecNumber evidence="1">1.8.4.11</ecNumber>
    </recommendedName>
    <alternativeName>
        <fullName evidence="1">Peptide-methionine (S)-S-oxide reductase</fullName>
        <shortName evidence="1">Peptide Met(O) reductase</shortName>
    </alternativeName>
</protein>
<gene>
    <name evidence="1" type="primary">msrA</name>
    <name type="ordered locus">XC_3402</name>
</gene>
<feature type="chain" id="PRO_1000068371" description="Peptide methionine sulfoxide reductase MsrA">
    <location>
        <begin position="1"/>
        <end position="216"/>
    </location>
</feature>
<feature type="active site" evidence="1">
    <location>
        <position position="54"/>
    </location>
</feature>
<organism>
    <name type="scientific">Xanthomonas campestris pv. campestris (strain 8004)</name>
    <dbReference type="NCBI Taxonomy" id="314565"/>
    <lineage>
        <taxon>Bacteria</taxon>
        <taxon>Pseudomonadati</taxon>
        <taxon>Pseudomonadota</taxon>
        <taxon>Gammaproteobacteria</taxon>
        <taxon>Lysobacterales</taxon>
        <taxon>Lysobacteraceae</taxon>
        <taxon>Xanthomonas</taxon>
    </lineage>
</organism>
<reference key="1">
    <citation type="journal article" date="2005" name="Genome Res.">
        <title>Comparative and functional genomic analyses of the pathogenicity of phytopathogen Xanthomonas campestris pv. campestris.</title>
        <authorList>
            <person name="Qian W."/>
            <person name="Jia Y."/>
            <person name="Ren S.-X."/>
            <person name="He Y.-Q."/>
            <person name="Feng J.-X."/>
            <person name="Lu L.-F."/>
            <person name="Sun Q."/>
            <person name="Ying G."/>
            <person name="Tang D.-J."/>
            <person name="Tang H."/>
            <person name="Wu W."/>
            <person name="Hao P."/>
            <person name="Wang L."/>
            <person name="Jiang B.-L."/>
            <person name="Zeng S."/>
            <person name="Gu W.-Y."/>
            <person name="Lu G."/>
            <person name="Rong L."/>
            <person name="Tian Y."/>
            <person name="Yao Z."/>
            <person name="Fu G."/>
            <person name="Chen B."/>
            <person name="Fang R."/>
            <person name="Qiang B."/>
            <person name="Chen Z."/>
            <person name="Zhao G.-P."/>
            <person name="Tang J.-L."/>
            <person name="He C."/>
        </authorList>
    </citation>
    <scope>NUCLEOTIDE SEQUENCE [LARGE SCALE GENOMIC DNA]</scope>
    <source>
        <strain>8004</strain>
    </source>
</reference>
<name>MSRA_XANC8</name>
<keyword id="KW-0560">Oxidoreductase</keyword>
<sequence>MLGIGAFKQRMPRSGEALPGRTQALPLHNTHLINGHPLRGEFTGLAQVQFGLGCFWGAERKFWNVPGVYTTAVGYAGGKTPNATYSEVCSGQTGHTEAVLVVYDAQAVSFEQLLRTFWESHDPTQGMQQGSDVGTQYRSAIYCSTQAQYDAAIASRDAYQQQLTAAGYGDITTEILYPAPTFYYAEDDHQQYLAKHPNGYCGLGGTGVSCPIGLDA</sequence>